<sequence length="324" mass="35874">MSSLTEDLETPILCESCLGPNPYIRMTKDPRGKSCKVCTRPFTVFRWNPGAGSRFKKTEICATCAKVKNVCQTCILDLQYGLPVQVRDAALGIKSDAGPTSSDKAKAYFADTMEKQLEATVGSSSRAGQELVRKAARREIDYKRDRPVQSQKLCSAFARGRCERGDSCPFKHQLPTDDQLPGLQPSSNINYPYSPTSSSPSKQAVAKILTSSTSSVGLPPPSDASVRSLFISNLPPEHLEEPSIRQFFLDLAPPLQAQDIKSITLVRASNCAFVNFATRDHAELAARRCEPKMRLGDKEIRLMWGRSRPVKRNEENECKKAEVE</sequence>
<dbReference type="EMBL" id="CM003140">
    <property type="protein sequence ID" value="KIS72255.1"/>
    <property type="molecule type" value="Genomic_DNA"/>
</dbReference>
<dbReference type="RefSeq" id="XP_011386470.1">
    <property type="nucleotide sequence ID" value="XM_011388168.1"/>
</dbReference>
<dbReference type="SMR" id="Q4PGU6"/>
<dbReference type="FunCoup" id="Q4PGU6">
    <property type="interactions" value="690"/>
</dbReference>
<dbReference type="STRING" id="237631.Q4PGU6"/>
<dbReference type="EnsemblFungi" id="KIS72255">
    <property type="protein sequence ID" value="KIS72255"/>
    <property type="gene ID" value="UMAG_00667"/>
</dbReference>
<dbReference type="GeneID" id="23561903"/>
<dbReference type="KEGG" id="uma:UMAG_00667"/>
<dbReference type="VEuPathDB" id="FungiDB:UMAG_00667"/>
<dbReference type="eggNOG" id="KOG0153">
    <property type="taxonomic scope" value="Eukaryota"/>
</dbReference>
<dbReference type="HOGENOM" id="CLU_027112_0_0_1"/>
<dbReference type="InParanoid" id="Q4PGU6"/>
<dbReference type="OMA" id="CPLRVQW"/>
<dbReference type="OrthoDB" id="10259600at2759"/>
<dbReference type="Proteomes" id="UP000000561">
    <property type="component" value="Chromosome 1"/>
</dbReference>
<dbReference type="GO" id="GO:0000974">
    <property type="term" value="C:Prp19 complex"/>
    <property type="evidence" value="ECO:0000318"/>
    <property type="project" value="GO_Central"/>
</dbReference>
<dbReference type="GO" id="GO:0071006">
    <property type="term" value="C:U2-type catalytic step 1 spliceosome"/>
    <property type="evidence" value="ECO:0000318"/>
    <property type="project" value="GO_Central"/>
</dbReference>
<dbReference type="GO" id="GO:0071007">
    <property type="term" value="C:U2-type catalytic step 2 spliceosome"/>
    <property type="evidence" value="ECO:0000318"/>
    <property type="project" value="GO_Central"/>
</dbReference>
<dbReference type="GO" id="GO:0036002">
    <property type="term" value="F:pre-mRNA binding"/>
    <property type="evidence" value="ECO:0000318"/>
    <property type="project" value="GO_Central"/>
</dbReference>
<dbReference type="GO" id="GO:0017070">
    <property type="term" value="F:U6 snRNA binding"/>
    <property type="evidence" value="ECO:0000318"/>
    <property type="project" value="GO_Central"/>
</dbReference>
<dbReference type="GO" id="GO:0008270">
    <property type="term" value="F:zinc ion binding"/>
    <property type="evidence" value="ECO:0007669"/>
    <property type="project" value="UniProtKB-KW"/>
</dbReference>
<dbReference type="GO" id="GO:0006397">
    <property type="term" value="P:mRNA processing"/>
    <property type="evidence" value="ECO:0007669"/>
    <property type="project" value="UniProtKB-KW"/>
</dbReference>
<dbReference type="GO" id="GO:0008380">
    <property type="term" value="P:RNA splicing"/>
    <property type="evidence" value="ECO:0007669"/>
    <property type="project" value="UniProtKB-KW"/>
</dbReference>
<dbReference type="FunFam" id="4.10.1000.10:FF:000116">
    <property type="entry name" value="CCCH-type zinc finger-containing protein"/>
    <property type="match status" value="1"/>
</dbReference>
<dbReference type="FunFam" id="3.30.70.330:FF:000476">
    <property type="entry name" value="Zinc finger CCCH domain-containing protein 4"/>
    <property type="match status" value="1"/>
</dbReference>
<dbReference type="Gene3D" id="3.30.70.330">
    <property type="match status" value="1"/>
</dbReference>
<dbReference type="Gene3D" id="4.10.1000.10">
    <property type="entry name" value="Zinc finger, CCCH-type"/>
    <property type="match status" value="1"/>
</dbReference>
<dbReference type="InterPro" id="IPR039171">
    <property type="entry name" value="Cwc2/Slt11"/>
</dbReference>
<dbReference type="InterPro" id="IPR012677">
    <property type="entry name" value="Nucleotide-bd_a/b_plait_sf"/>
</dbReference>
<dbReference type="InterPro" id="IPR035979">
    <property type="entry name" value="RBD_domain_sf"/>
</dbReference>
<dbReference type="InterPro" id="IPR000504">
    <property type="entry name" value="RRM_dom"/>
</dbReference>
<dbReference type="InterPro" id="IPR048995">
    <property type="entry name" value="STL11/RBM22-like_N"/>
</dbReference>
<dbReference type="InterPro" id="IPR032297">
    <property type="entry name" value="Torus"/>
</dbReference>
<dbReference type="InterPro" id="IPR000571">
    <property type="entry name" value="Znf_CCCH"/>
</dbReference>
<dbReference type="InterPro" id="IPR036855">
    <property type="entry name" value="Znf_CCCH_sf"/>
</dbReference>
<dbReference type="PANTHER" id="PTHR14089">
    <property type="entry name" value="PRE-MRNA-SPLICING FACTOR RBM22"/>
    <property type="match status" value="1"/>
</dbReference>
<dbReference type="PANTHER" id="PTHR14089:SF6">
    <property type="entry name" value="PRE-MRNA-SPLICING FACTOR RBM22"/>
    <property type="match status" value="1"/>
</dbReference>
<dbReference type="Pfam" id="PF00076">
    <property type="entry name" value="RRM_1"/>
    <property type="match status" value="1"/>
</dbReference>
<dbReference type="Pfam" id="PF21369">
    <property type="entry name" value="STL11_N"/>
    <property type="match status" value="1"/>
</dbReference>
<dbReference type="Pfam" id="PF16131">
    <property type="entry name" value="Torus"/>
    <property type="match status" value="1"/>
</dbReference>
<dbReference type="SMART" id="SM00360">
    <property type="entry name" value="RRM"/>
    <property type="match status" value="1"/>
</dbReference>
<dbReference type="SMART" id="SM00356">
    <property type="entry name" value="ZnF_C3H1"/>
    <property type="match status" value="1"/>
</dbReference>
<dbReference type="SUPFAM" id="SSF90229">
    <property type="entry name" value="CCCH zinc finger"/>
    <property type="match status" value="1"/>
</dbReference>
<dbReference type="SUPFAM" id="SSF54928">
    <property type="entry name" value="RNA-binding domain, RBD"/>
    <property type="match status" value="1"/>
</dbReference>
<dbReference type="PROSITE" id="PS50102">
    <property type="entry name" value="RRM"/>
    <property type="match status" value="1"/>
</dbReference>
<dbReference type="PROSITE" id="PS50103">
    <property type="entry name" value="ZF_C3H1"/>
    <property type="match status" value="1"/>
</dbReference>
<feature type="chain" id="PRO_0000212430" description="Pre-mRNA-splicing factor SLT11">
    <location>
        <begin position="1"/>
        <end position="324"/>
    </location>
</feature>
<feature type="domain" description="RRM" evidence="2">
    <location>
        <begin position="227"/>
        <end position="317"/>
    </location>
</feature>
<feature type="zinc finger region" description="C3H1-type" evidence="3">
    <location>
        <begin position="149"/>
        <end position="175"/>
    </location>
</feature>
<feature type="region of interest" description="Disordered" evidence="4">
    <location>
        <begin position="173"/>
        <end position="206"/>
    </location>
</feature>
<feature type="compositionally biased region" description="Low complexity" evidence="4">
    <location>
        <begin position="185"/>
        <end position="201"/>
    </location>
</feature>
<organism>
    <name type="scientific">Mycosarcoma maydis</name>
    <name type="common">Corn smut fungus</name>
    <name type="synonym">Ustilago maydis</name>
    <dbReference type="NCBI Taxonomy" id="5270"/>
    <lineage>
        <taxon>Eukaryota</taxon>
        <taxon>Fungi</taxon>
        <taxon>Dikarya</taxon>
        <taxon>Basidiomycota</taxon>
        <taxon>Ustilaginomycotina</taxon>
        <taxon>Ustilaginomycetes</taxon>
        <taxon>Ustilaginales</taxon>
        <taxon>Ustilaginaceae</taxon>
        <taxon>Mycosarcoma</taxon>
    </lineage>
</organism>
<accession>Q4PGU6</accession>
<accession>A0A0D1EDH3</accession>
<gene>
    <name type="primary">SLT11</name>
    <name type="ORF">UMAG_00667</name>
</gene>
<comment type="function">
    <text evidence="1">Involved in pre-mRNA splicing. Facilitates the cooperative formation of U2/U6 helix II in association with stem II in the spliceosome. Binds to RNA (By similarity).</text>
</comment>
<comment type="subunit">
    <text evidence="1">Associated with the spliceosome.</text>
</comment>
<comment type="subcellular location">
    <subcellularLocation>
        <location evidence="1">Nucleus</location>
    </subcellularLocation>
</comment>
<comment type="similarity">
    <text evidence="5">Belongs to the SLT11 family.</text>
</comment>
<evidence type="ECO:0000250" key="1"/>
<evidence type="ECO:0000255" key="2">
    <source>
        <dbReference type="PROSITE-ProRule" id="PRU00176"/>
    </source>
</evidence>
<evidence type="ECO:0000255" key="3">
    <source>
        <dbReference type="PROSITE-ProRule" id="PRU00723"/>
    </source>
</evidence>
<evidence type="ECO:0000256" key="4">
    <source>
        <dbReference type="SAM" id="MobiDB-lite"/>
    </source>
</evidence>
<evidence type="ECO:0000305" key="5"/>
<protein>
    <recommendedName>
        <fullName>Pre-mRNA-splicing factor SLT11</fullName>
    </recommendedName>
</protein>
<proteinExistence type="inferred from homology"/>
<reference key="1">
    <citation type="journal article" date="2006" name="Nature">
        <title>Insights from the genome of the biotrophic fungal plant pathogen Ustilago maydis.</title>
        <authorList>
            <person name="Kaemper J."/>
            <person name="Kahmann R."/>
            <person name="Boelker M."/>
            <person name="Ma L.-J."/>
            <person name="Brefort T."/>
            <person name="Saville B.J."/>
            <person name="Banuett F."/>
            <person name="Kronstad J.W."/>
            <person name="Gold S.E."/>
            <person name="Mueller O."/>
            <person name="Perlin M.H."/>
            <person name="Woesten H.A.B."/>
            <person name="de Vries R."/>
            <person name="Ruiz-Herrera J."/>
            <person name="Reynaga-Pena C.G."/>
            <person name="Snetselaar K."/>
            <person name="McCann M."/>
            <person name="Perez-Martin J."/>
            <person name="Feldbruegge M."/>
            <person name="Basse C.W."/>
            <person name="Steinberg G."/>
            <person name="Ibeas J.I."/>
            <person name="Holloman W."/>
            <person name="Guzman P."/>
            <person name="Farman M.L."/>
            <person name="Stajich J.E."/>
            <person name="Sentandreu R."/>
            <person name="Gonzalez-Prieto J.M."/>
            <person name="Kennell J.C."/>
            <person name="Molina L."/>
            <person name="Schirawski J."/>
            <person name="Mendoza-Mendoza A."/>
            <person name="Greilinger D."/>
            <person name="Muench K."/>
            <person name="Roessel N."/>
            <person name="Scherer M."/>
            <person name="Vranes M."/>
            <person name="Ladendorf O."/>
            <person name="Vincon V."/>
            <person name="Fuchs U."/>
            <person name="Sandrock B."/>
            <person name="Meng S."/>
            <person name="Ho E.C.H."/>
            <person name="Cahill M.J."/>
            <person name="Boyce K.J."/>
            <person name="Klose J."/>
            <person name="Klosterman S.J."/>
            <person name="Deelstra H.J."/>
            <person name="Ortiz-Castellanos L."/>
            <person name="Li W."/>
            <person name="Sanchez-Alonso P."/>
            <person name="Schreier P.H."/>
            <person name="Haeuser-Hahn I."/>
            <person name="Vaupel M."/>
            <person name="Koopmann E."/>
            <person name="Friedrich G."/>
            <person name="Voss H."/>
            <person name="Schlueter T."/>
            <person name="Margolis J."/>
            <person name="Platt D."/>
            <person name="Swimmer C."/>
            <person name="Gnirke A."/>
            <person name="Chen F."/>
            <person name="Vysotskaia V."/>
            <person name="Mannhaupt G."/>
            <person name="Gueldener U."/>
            <person name="Muensterkoetter M."/>
            <person name="Haase D."/>
            <person name="Oesterheld M."/>
            <person name="Mewes H.-W."/>
            <person name="Mauceli E.W."/>
            <person name="DeCaprio D."/>
            <person name="Wade C.M."/>
            <person name="Butler J."/>
            <person name="Young S.K."/>
            <person name="Jaffe D.B."/>
            <person name="Calvo S.E."/>
            <person name="Nusbaum C."/>
            <person name="Galagan J.E."/>
            <person name="Birren B.W."/>
        </authorList>
    </citation>
    <scope>NUCLEOTIDE SEQUENCE [LARGE SCALE GENOMIC DNA]</scope>
    <source>
        <strain>DSM 14603 / FGSC 9021 / UM521</strain>
    </source>
</reference>
<reference key="2">
    <citation type="submission" date="2014-09" db="EMBL/GenBank/DDBJ databases">
        <authorList>
            <person name="Gueldener U."/>
            <person name="Muensterkoetter M."/>
            <person name="Walter M.C."/>
            <person name="Mannhaupt G."/>
            <person name="Kahmann R."/>
        </authorList>
    </citation>
    <scope>GENOME REANNOTATION</scope>
    <source>
        <strain>DSM 14603 / FGSC 9021 / UM521</strain>
    </source>
</reference>
<keyword id="KW-0479">Metal-binding</keyword>
<keyword id="KW-0507">mRNA processing</keyword>
<keyword id="KW-0508">mRNA splicing</keyword>
<keyword id="KW-0539">Nucleus</keyword>
<keyword id="KW-1185">Reference proteome</keyword>
<keyword id="KW-0694">RNA-binding</keyword>
<keyword id="KW-0747">Spliceosome</keyword>
<keyword id="KW-0862">Zinc</keyword>
<keyword id="KW-0863">Zinc-finger</keyword>
<name>SLT11_MYCMD</name>